<feature type="chain" id="PRO_0000437184" description="Fructose-1,6-bisphosphate aldolase/phosphatase">
    <location>
        <begin position="1"/>
        <end position="384"/>
    </location>
</feature>
<feature type="active site" description="Proton acceptor; for FBP phosphatase activity" evidence="9 11">
    <location>
        <position position="11"/>
    </location>
</feature>
<feature type="active site" description="Proton donor/acceptor; for FBP aldolase activity" evidence="11">
    <location>
        <position position="228"/>
    </location>
</feature>
<feature type="active site" description="Schiff-base intermediate with DHAP; for FBP aldolase activity" evidence="4">
    <location>
        <position position="231"/>
    </location>
</feature>
<feature type="binding site" evidence="2 4 13 14">
    <location>
        <position position="11"/>
    </location>
    <ligand>
        <name>Mg(2+)</name>
        <dbReference type="ChEBI" id="CHEBI:18420"/>
        <label>1</label>
    </ligand>
</feature>
<feature type="binding site" description="in other chain" evidence="2 13">
    <location>
        <position position="18"/>
    </location>
    <ligand>
        <name>beta-D-fructose 1,6-bisphosphate</name>
        <dbReference type="ChEBI" id="CHEBI:32966"/>
        <note>ligand shared between dimeric partners</note>
    </ligand>
</feature>
<feature type="binding site" evidence="4 14">
    <location>
        <position position="18"/>
    </location>
    <ligand>
        <name>dihydroxyacetone phosphate</name>
        <dbReference type="ChEBI" id="CHEBI:57642"/>
    </ligand>
</feature>
<feature type="binding site" evidence="2 4 13 14">
    <location>
        <position position="18"/>
    </location>
    <ligand>
        <name>Mg(2+)</name>
        <dbReference type="ChEBI" id="CHEBI:18420"/>
        <label>1</label>
    </ligand>
</feature>
<feature type="binding site" evidence="2 4 13 14">
    <location>
        <position position="52"/>
    </location>
    <ligand>
        <name>Mg(2+)</name>
        <dbReference type="ChEBI" id="CHEBI:18420"/>
        <label>1</label>
    </ligand>
</feature>
<feature type="binding site" evidence="2 4 13 14">
    <location>
        <position position="52"/>
    </location>
    <ligand>
        <name>Mg(2+)</name>
        <dbReference type="ChEBI" id="CHEBI:18420"/>
        <label>2</label>
    </ligand>
</feature>
<feature type="binding site" evidence="2 4 13 14">
    <location>
        <position position="53"/>
    </location>
    <ligand>
        <name>Mg(2+)</name>
        <dbReference type="ChEBI" id="CHEBI:18420"/>
        <label>2</label>
    </ligand>
</feature>
<feature type="binding site" description="in other chain" evidence="2 13">
    <location>
        <position position="90"/>
    </location>
    <ligand>
        <name>beta-D-fructose 1,6-bisphosphate</name>
        <dbReference type="ChEBI" id="CHEBI:32966"/>
        <note>ligand shared between dimeric partners</note>
    </ligand>
</feature>
<feature type="binding site" evidence="2 4 13 14">
    <location>
        <position position="94"/>
    </location>
    <ligand>
        <name>Mg(2+)</name>
        <dbReference type="ChEBI" id="CHEBI:18420"/>
        <label>1</label>
    </ligand>
</feature>
<feature type="binding site" description="in other chain" evidence="2 13">
    <location>
        <begin position="103"/>
        <end position="104"/>
    </location>
    <ligand>
        <name>beta-D-fructose 1,6-bisphosphate</name>
        <dbReference type="ChEBI" id="CHEBI:32966"/>
        <note>ligand shared between dimeric partners</note>
    </ligand>
</feature>
<feature type="binding site" evidence="2 4 13 14">
    <location>
        <position position="131"/>
    </location>
    <ligand>
        <name>Mg(2+)</name>
        <dbReference type="ChEBI" id="CHEBI:18420"/>
        <label>2</label>
    </ligand>
</feature>
<feature type="binding site" description="in other chain" evidence="2 13">
    <location>
        <position position="132"/>
    </location>
    <ligand>
        <name>beta-D-fructose 1,6-bisphosphate</name>
        <dbReference type="ChEBI" id="CHEBI:32966"/>
        <note>ligand shared between dimeric partners</note>
    </ligand>
</feature>
<feature type="binding site" evidence="4 14">
    <location>
        <position position="132"/>
    </location>
    <ligand>
        <name>dihydroxyacetone phosphate</name>
        <dbReference type="ChEBI" id="CHEBI:57642"/>
    </ligand>
</feature>
<feature type="binding site" evidence="4">
    <location>
        <position position="231"/>
    </location>
    <ligand>
        <name>Mg(2+)</name>
        <dbReference type="ChEBI" id="CHEBI:18420"/>
        <label>3</label>
    </ligand>
</feature>
<feature type="binding site" evidence="2">
    <location>
        <position position="232"/>
    </location>
    <ligand>
        <name>Mg(2+)</name>
        <dbReference type="ChEBI" id="CHEBI:18420"/>
        <label>3</label>
    </ligand>
</feature>
<feature type="binding site" evidence="2">
    <location>
        <position position="232"/>
    </location>
    <ligand>
        <name>Mg(2+)</name>
        <dbReference type="ChEBI" id="CHEBI:18420"/>
        <label>4</label>
    </ligand>
</feature>
<feature type="binding site" evidence="2 4 13 14">
    <location>
        <position position="233"/>
    </location>
    <ligand>
        <name>Mg(2+)</name>
        <dbReference type="ChEBI" id="CHEBI:18420"/>
        <label>2</label>
    </ligand>
</feature>
<feature type="binding site" evidence="2 4">
    <location>
        <position position="233"/>
    </location>
    <ligand>
        <name>Mg(2+)</name>
        <dbReference type="ChEBI" id="CHEBI:18420"/>
        <label>3</label>
    </ligand>
</feature>
<feature type="binding site" evidence="2 13">
    <location>
        <begin position="241"/>
        <end position="242"/>
    </location>
    <ligand>
        <name>beta-D-fructose 1,6-bisphosphate</name>
        <dbReference type="ChEBI" id="CHEBI:32966"/>
        <note>ligand shared between dimeric partners</note>
    </ligand>
</feature>
<feature type="binding site" description="in other chain" evidence="2 13">
    <location>
        <position position="265"/>
    </location>
    <ligand>
        <name>beta-D-fructose 1,6-bisphosphate</name>
        <dbReference type="ChEBI" id="CHEBI:32966"/>
        <note>ligand shared between dimeric partners</note>
    </ligand>
</feature>
<feature type="binding site" evidence="4 14">
    <location>
        <position position="265"/>
    </location>
    <ligand>
        <name>dihydroxyacetone phosphate</name>
        <dbReference type="ChEBI" id="CHEBI:57642"/>
    </ligand>
</feature>
<feature type="binding site" description="in other chain" evidence="2 13">
    <location>
        <position position="286"/>
    </location>
    <ligand>
        <name>beta-D-fructose 1,6-bisphosphate</name>
        <dbReference type="ChEBI" id="CHEBI:32966"/>
        <note>ligand shared between dimeric partners</note>
    </ligand>
</feature>
<feature type="binding site" evidence="4 14">
    <location>
        <position position="286"/>
    </location>
    <ligand>
        <name>dihydroxyacetone phosphate</name>
        <dbReference type="ChEBI" id="CHEBI:57642"/>
    </ligand>
</feature>
<feature type="binding site" description="in other chain" evidence="2 13">
    <location>
        <position position="347"/>
    </location>
    <ligand>
        <name>beta-D-fructose 1,6-bisphosphate</name>
        <dbReference type="ChEBI" id="CHEBI:32966"/>
        <note>ligand shared between dimeric partners</note>
    </ligand>
</feature>
<feature type="mutagenesis site" description="930-fold decrease in FBPase catalytic efficiency." evidence="2">
    <original>D</original>
    <variation>A</variation>
    <location>
        <position position="11"/>
    </location>
</feature>
<feature type="mutagenesis site" description="1.7-fold increase in FBPase catalytic activity and 5-fold decrease in FBP affinity, leading to a 2.7-fold decrease in FBPase catalytic efficiency." evidence="2">
    <original>H</original>
    <variation>A</variation>
    <location>
        <position position="18"/>
    </location>
</feature>
<feature type="mutagenesis site" description="175-fold decrease in FBPase catalytic efficiency." evidence="2">
    <original>D</original>
    <variation>A</variation>
    <location>
        <position position="52"/>
    </location>
</feature>
<feature type="mutagenesis site" description="1000-fold decrease in FBPase catalytic activity." evidence="2">
    <original>D</original>
    <variation>A</variation>
    <location>
        <position position="53"/>
    </location>
</feature>
<feature type="mutagenesis site" description="1.3-fold increase in FBPase catalytic efficiency." evidence="2">
    <original>Q</original>
    <variation>A</variation>
    <location>
        <position position="94"/>
    </location>
</feature>
<feature type="mutagenesis site" description="2-fold increase in FBP affinity and 10-fold decrease in FBPase catalytic activity, leading to a 5.5-fold decrease in FBPase catalytic efficiency." evidence="2">
    <original>D</original>
    <variation>A</variation>
    <location>
        <position position="131"/>
    </location>
</feature>
<feature type="mutagenesis site" description="Retains the FBPase activity, but loses the FBP aldolase activity." evidence="4">
    <original>Y</original>
    <variation>F</variation>
    <location>
        <position position="228"/>
    </location>
</feature>
<feature type="mutagenesis site" description="275-fold decrease in FBPase catalytic activity." evidence="2">
    <original>D</original>
    <variation>A</variation>
    <location>
        <position position="232"/>
    </location>
</feature>
<feature type="mutagenesis site" description="2000-fold decrease in FBPase catalytic activity." evidence="2">
    <original>D</original>
    <variation>A</variation>
    <location>
        <position position="233"/>
    </location>
</feature>
<feature type="strand" evidence="16">
    <location>
        <begin position="3"/>
        <end position="10"/>
    </location>
</feature>
<feature type="turn" evidence="16">
    <location>
        <begin position="16"/>
        <end position="19"/>
    </location>
</feature>
<feature type="helix" evidence="16">
    <location>
        <begin position="23"/>
        <end position="38"/>
    </location>
</feature>
<feature type="strand" evidence="16">
    <location>
        <begin position="43"/>
        <end position="50"/>
    </location>
</feature>
<feature type="strand" evidence="16">
    <location>
        <begin position="53"/>
        <end position="62"/>
    </location>
</feature>
<feature type="helix" evidence="16">
    <location>
        <begin position="67"/>
        <end position="86"/>
    </location>
</feature>
<feature type="turn" evidence="16">
    <location>
        <begin position="91"/>
        <end position="95"/>
    </location>
</feature>
<feature type="strand" evidence="16">
    <location>
        <begin position="98"/>
        <end position="100"/>
    </location>
</feature>
<feature type="turn" evidence="16">
    <location>
        <begin position="106"/>
        <end position="108"/>
    </location>
</feature>
<feature type="strand" evidence="16">
    <location>
        <begin position="111"/>
        <end position="117"/>
    </location>
</feature>
<feature type="strand" evidence="16">
    <location>
        <begin position="124"/>
        <end position="133"/>
    </location>
</feature>
<feature type="helix" evidence="16">
    <location>
        <begin position="135"/>
        <end position="138"/>
    </location>
</feature>
<feature type="helix" evidence="16">
    <location>
        <begin position="139"/>
        <end position="147"/>
    </location>
</feature>
<feature type="turn" evidence="16">
    <location>
        <begin position="149"/>
        <end position="151"/>
    </location>
</feature>
<feature type="helix" evidence="16">
    <location>
        <begin position="154"/>
        <end position="157"/>
    </location>
</feature>
<feature type="turn" evidence="16">
    <location>
        <begin position="159"/>
        <end position="163"/>
    </location>
</feature>
<feature type="strand" evidence="16">
    <location>
        <begin position="165"/>
        <end position="171"/>
    </location>
</feature>
<feature type="turn" evidence="16">
    <location>
        <begin position="172"/>
        <end position="175"/>
    </location>
</feature>
<feature type="strand" evidence="16">
    <location>
        <begin position="176"/>
        <end position="181"/>
    </location>
</feature>
<feature type="turn" evidence="16">
    <location>
        <begin position="182"/>
        <end position="185"/>
    </location>
</feature>
<feature type="helix" evidence="16">
    <location>
        <begin position="186"/>
        <end position="193"/>
    </location>
</feature>
<feature type="turn" evidence="16">
    <location>
        <begin position="196"/>
        <end position="198"/>
    </location>
</feature>
<feature type="strand" evidence="16">
    <location>
        <begin position="199"/>
        <end position="206"/>
    </location>
</feature>
<feature type="turn" evidence="16">
    <location>
        <begin position="207"/>
        <end position="209"/>
    </location>
</feature>
<feature type="strand" evidence="16">
    <location>
        <begin position="212"/>
        <end position="216"/>
    </location>
</feature>
<feature type="helix" evidence="16">
    <location>
        <begin position="221"/>
        <end position="225"/>
    </location>
</feature>
<feature type="strand" evidence="16">
    <location>
        <begin position="235"/>
        <end position="239"/>
    </location>
</feature>
<feature type="strand" evidence="15">
    <location>
        <begin position="241"/>
        <end position="244"/>
    </location>
</feature>
<feature type="helix" evidence="16">
    <location>
        <begin position="247"/>
        <end position="252"/>
    </location>
</feature>
<feature type="strand" evidence="16">
    <location>
        <begin position="259"/>
        <end position="263"/>
    </location>
</feature>
<feature type="helix" evidence="16">
    <location>
        <begin position="264"/>
        <end position="266"/>
    </location>
</feature>
<feature type="strand" evidence="16">
    <location>
        <begin position="268"/>
        <end position="271"/>
    </location>
</feature>
<feature type="strand" evidence="16">
    <location>
        <begin position="273"/>
        <end position="275"/>
    </location>
</feature>
<feature type="helix" evidence="16">
    <location>
        <begin position="284"/>
        <end position="286"/>
    </location>
</feature>
<feature type="strand" evidence="16">
    <location>
        <begin position="290"/>
        <end position="299"/>
    </location>
</feature>
<feature type="strand" evidence="16">
    <location>
        <begin position="302"/>
        <end position="310"/>
    </location>
</feature>
<feature type="helix" evidence="16">
    <location>
        <begin position="313"/>
        <end position="315"/>
    </location>
</feature>
<feature type="helix" evidence="16">
    <location>
        <begin position="316"/>
        <end position="330"/>
    </location>
</feature>
<feature type="turn" evidence="16">
    <location>
        <begin position="331"/>
        <end position="334"/>
    </location>
</feature>
<feature type="turn" evidence="16">
    <location>
        <begin position="336"/>
        <end position="338"/>
    </location>
</feature>
<feature type="helix" evidence="16">
    <location>
        <begin position="342"/>
        <end position="345"/>
    </location>
</feature>
<feature type="helix" evidence="15">
    <location>
        <begin position="350"/>
        <end position="356"/>
    </location>
</feature>
<feature type="turn" evidence="15">
    <location>
        <begin position="357"/>
        <end position="360"/>
    </location>
</feature>
<sequence length="384" mass="42574">MKTTISVIKADIGSLAGHHIVHPDTMAAANKVLASAKEQGIILDYYITHVGDDLQLIMTHTRGELDTKVHETAWNAFKEAAKVAKDLGLYAAGQDLLSDSFSGNVRGLGPGVAEMEIEERASEPIAIFMADKTEPGAYNLPLYKMFADPFNTPGLVIDPTMHGGFKFEVLDVYQGEAVMLSAPQEIYDLLALIGTPARYVIRRVYRNEDNLLAAVVSIERLNLIAGKYVGKDDPVMIVRLQHGLPALGEALEAFAFPHLVPGWMRGSHYGPLMPVSQRDAKATRFDGPPRLLGLGFNVKNGRLVGPTDLFDDPAFDETRRLANIVADYMRRHGPFMPHRLEPTEMEYTTLPLILEKLKDRFKKESDVYKAKESIYAKEESQGHD</sequence>
<accession>F9VMT6</accession>
<name>FBPAP_SULTO</name>
<proteinExistence type="evidence at protein level"/>
<organism>
    <name type="scientific">Sulfurisphaera tokodaii (strain DSM 16993 / JCM 10545 / NBRC 100140 / 7)</name>
    <name type="common">Sulfolobus tokodaii</name>
    <dbReference type="NCBI Taxonomy" id="273063"/>
    <lineage>
        <taxon>Archaea</taxon>
        <taxon>Thermoproteota</taxon>
        <taxon>Thermoprotei</taxon>
        <taxon>Sulfolobales</taxon>
        <taxon>Sulfolobaceae</taxon>
        <taxon>Sulfurisphaera</taxon>
    </lineage>
</organism>
<gene>
    <name evidence="5 12" type="primary">fbp</name>
    <name evidence="12" type="ordered locus">STK_03180</name>
</gene>
<comment type="function">
    <text evidence="2 3 4">Catalyzes two subsequent steps in gluconeogenesis: the aldol condensation of dihydroxyacetone phosphate (DHAP) and glyceraldehyde-3-phosphate (GA3P) to fructose-1,6-bisphosphate (FBP), and the dephosphorylation of FBP to fructose-6-phosphate (F6P).</text>
</comment>
<comment type="catalytic activity">
    <reaction evidence="2 3 4">
        <text>beta-D-fructose 1,6-bisphosphate + H2O = beta-D-fructose 6-phosphate + phosphate</text>
        <dbReference type="Rhea" id="RHEA:11064"/>
        <dbReference type="ChEBI" id="CHEBI:15377"/>
        <dbReference type="ChEBI" id="CHEBI:32966"/>
        <dbReference type="ChEBI" id="CHEBI:43474"/>
        <dbReference type="ChEBI" id="CHEBI:57634"/>
        <dbReference type="EC" id="3.1.3.11"/>
    </reaction>
</comment>
<comment type="catalytic activity">
    <reaction evidence="3 4">
        <text>beta-D-fructose 1,6-bisphosphate = D-glyceraldehyde 3-phosphate + dihydroxyacetone phosphate</text>
        <dbReference type="Rhea" id="RHEA:14729"/>
        <dbReference type="ChEBI" id="CHEBI:32966"/>
        <dbReference type="ChEBI" id="CHEBI:57642"/>
        <dbReference type="ChEBI" id="CHEBI:59776"/>
        <dbReference type="EC" id="4.1.2.13"/>
    </reaction>
</comment>
<comment type="cofactor">
    <cofactor evidence="2">
        <name>Mg(2+)</name>
        <dbReference type="ChEBI" id="CHEBI:18420"/>
    </cofactor>
    <text evidence="2">Can also use Zn(2+) or Mn(2+) in vitro, although with much less efficiency than Mg(2+).</text>
</comment>
<comment type="biophysicochemical properties">
    <kinetics>
        <KM evidence="2">0.027 mM for D-fructose 1,6-bisphosphate (when assaying the FBPase activity, at 80 degrees Celsius)</KM>
        <KM evidence="4">0.027 mM for D-fructose 1,6-bisphosphate (when assaying the FBPase activity, at 48 degrees Celsius)</KM>
        <KM evidence="4">0.19 mM for triosephosphates (when assaying the FBP aldolase activity in the anabolic direction, at 48 degrees Celsius)</KM>
        <text evidence="2 4">kcat is 2.5 sec(-1) for the FBPase activity (at 80 degrees Celsius) (PubMed:15274916). kcat is 0.62 sec(-1) for the FBPase activity (at 48 degrees Celsius). kcat is 0.91 sec(-1) for the FBP aldolase activity in the anabolic direction (at 48 degrees Celsius). kcat is 0.027 sec(-1) for the FBP aldolase activity in the catabolic direction (at 48 degrees Celsius) (PubMed:21983966).</text>
    </kinetics>
    <phDependence>
        <text evidence="2">Optimum pH is 8.0.</text>
    </phDependence>
    <temperatureDependence>
        <text evidence="2">Optimum temperature is over 100 degrees Celsius.</text>
    </temperatureDependence>
</comment>
<comment type="pathway">
    <text evidence="10 11">Carbohydrate biosynthesis; gluconeogenesis.</text>
</comment>
<comment type="subunit">
    <text evidence="2">Homooctamer; dimer of tetramers.</text>
</comment>
<comment type="domain">
    <text evidence="4">Consists of a single catalytic domain, but remodels its active-site architecture via a large structural change to exhibit dual activities.</text>
</comment>
<comment type="similarity">
    <text evidence="1 8">Belongs to the FBP aldolase/phosphatase family.</text>
</comment>
<reference key="1">
    <citation type="journal article" date="2001" name="DNA Res.">
        <title>Complete genome sequence of an aerobic thermoacidophilic Crenarchaeon, Sulfolobus tokodaii strain7.</title>
        <authorList>
            <person name="Kawarabayasi Y."/>
            <person name="Hino Y."/>
            <person name="Horikawa H."/>
            <person name="Jin-no K."/>
            <person name="Takahashi M."/>
            <person name="Sekine M."/>
            <person name="Baba S."/>
            <person name="Ankai A."/>
            <person name="Kosugi H."/>
            <person name="Hosoyama A."/>
            <person name="Fukui S."/>
            <person name="Nagai Y."/>
            <person name="Nishijima K."/>
            <person name="Otsuka R."/>
            <person name="Nakazawa H."/>
            <person name="Takamiya M."/>
            <person name="Kato Y."/>
            <person name="Yoshizawa T."/>
            <person name="Tanaka T."/>
            <person name="Kudoh Y."/>
            <person name="Yamazaki J."/>
            <person name="Kushida N."/>
            <person name="Oguchi A."/>
            <person name="Aoki K."/>
            <person name="Masuda S."/>
            <person name="Yanagii M."/>
            <person name="Nishimura M."/>
            <person name="Yamagishi A."/>
            <person name="Oshima T."/>
            <person name="Kikuchi H."/>
        </authorList>
    </citation>
    <scope>NUCLEOTIDE SEQUENCE [LARGE SCALE GENOMIC DNA]</scope>
    <source>
        <strain>DSM 16993 / JCM 10545 / NBRC 100140 / 7</strain>
    </source>
</reference>
<reference key="2">
    <citation type="journal article" date="2010" name="Nature">
        <title>Fructose 1,6-bisphosphate aldolase/phosphatase may be an ancestral gluconeogenic enzyme.</title>
        <authorList>
            <person name="Say R.F."/>
            <person name="Fuchs G."/>
        </authorList>
    </citation>
    <scope>FUNCTION AS BOTH FBPASE AND FBP ALDOLASE</scope>
    <scope>CATALYTIC ACTIVITY</scope>
    <scope>PATHWAY</scope>
    <source>
        <strain>DSM 16993 / JCM 10545 / NBRC 100140 / 7</strain>
    </source>
</reference>
<reference evidence="13" key="3">
    <citation type="journal article" date="2004" name="Structure">
        <title>The first crystal structure of the novel class of fructose-1,6-bisphosphatase present in thermophilic archaea.</title>
        <authorList>
            <person name="Nishimasu H."/>
            <person name="Fushinobu S."/>
            <person name="Shoun H."/>
            <person name="Wakagi T."/>
        </authorList>
    </citation>
    <scope>X-RAY CRYSTALLOGRAPHY (1.80 ANGSTROMS) OF 2-363 IN COMPLEX WITH MAGNESIUM AND FBP (FBPASE FORM)</scope>
    <scope>FUNCTION AS A FBPASE</scope>
    <scope>CATALYTIC ACTIVITY</scope>
    <scope>BIOPHYSICOCHEMICAL PROPERTIES</scope>
    <scope>COFACTOR</scope>
    <scope>SUBUNIT</scope>
    <scope>ACTIVE SITE</scope>
    <scope>MUTAGENESIS OF ASP-11; HIS-18; ASP-52; ASP-53; GLN-94; ASP-131; ASP-232 AND ASP-233</scope>
    <source>
        <strain>DSM 16993 / JCM 10545 / NBRC 100140 / 7</strain>
    </source>
</reference>
<reference evidence="14" key="4">
    <citation type="journal article" date="2011" name="Nature">
        <title>Structural basis for the bifunctionality of fructose-1,6-bisphosphate aldolase/phosphatase.</title>
        <authorList>
            <person name="Fushinobu S."/>
            <person name="Nishimasu H."/>
            <person name="Hattori D."/>
            <person name="Song H.J."/>
            <person name="Wakagi T."/>
        </authorList>
    </citation>
    <scope>X-RAY CRYSTALLOGRAPHY (1.50 ANGSTROMS) IN COMPLEX WITH MAGNESIUM AND DHAP (ALDOLASE FORM)</scope>
    <scope>SCHIFF BASE FORMATION WITH DHAP</scope>
    <scope>FUNCTION AS BOTH FBPASE AND FBP ALDOLASE</scope>
    <scope>CATALYTIC ACTIVITY</scope>
    <scope>BIOPHYSICOCHEMICAL PROPERTIES</scope>
    <scope>PATHWAY</scope>
    <scope>REACTION MECHANISM</scope>
    <scope>ACTIVE SITE</scope>
    <scope>DOMAIN</scope>
    <scope>MUTAGENESIS OF TYR-228</scope>
    <source>
        <strain>DSM 16993 / JCM 10545 / NBRC 100140 / 7</strain>
    </source>
</reference>
<dbReference type="EC" id="3.1.3.11" evidence="2 3 4"/>
<dbReference type="EC" id="4.1.2.13" evidence="3 4"/>
<dbReference type="EMBL" id="BA000023">
    <property type="protein sequence ID" value="BAK54233.1"/>
    <property type="molecule type" value="Genomic_DNA"/>
</dbReference>
<dbReference type="RefSeq" id="WP_052846263.1">
    <property type="nucleotide sequence ID" value="NC_003106.2"/>
</dbReference>
<dbReference type="PDB" id="1UMG">
    <property type="method" value="X-ray"/>
    <property type="resolution" value="1.80 A"/>
    <property type="chains" value="A=2-363"/>
</dbReference>
<dbReference type="PDB" id="3R1M">
    <property type="method" value="X-ray"/>
    <property type="resolution" value="1.50 A"/>
    <property type="chains" value="A=1-384"/>
</dbReference>
<dbReference type="PDBsum" id="1UMG"/>
<dbReference type="PDBsum" id="3R1M"/>
<dbReference type="SMR" id="F9VMT6"/>
<dbReference type="DIP" id="DIP-59164N"/>
<dbReference type="STRING" id="273063.STK_03180"/>
<dbReference type="MoonProt" id="F9VMT6"/>
<dbReference type="GeneID" id="95643600"/>
<dbReference type="KEGG" id="sto:STK_03180"/>
<dbReference type="PATRIC" id="fig|273063.9.peg.371"/>
<dbReference type="eggNOG" id="arCOG04180">
    <property type="taxonomic scope" value="Archaea"/>
</dbReference>
<dbReference type="OrthoDB" id="5829at2157"/>
<dbReference type="BRENDA" id="3.1.3.11">
    <property type="organism ID" value="15396"/>
</dbReference>
<dbReference type="BRENDA" id="4.1.2.13">
    <property type="organism ID" value="15396"/>
</dbReference>
<dbReference type="UniPathway" id="UPA00138"/>
<dbReference type="EvolutionaryTrace" id="F9VMT6"/>
<dbReference type="Proteomes" id="UP000001015">
    <property type="component" value="Chromosome"/>
</dbReference>
<dbReference type="GO" id="GO:0042132">
    <property type="term" value="F:fructose 1,6-bisphosphate 1-phosphatase activity"/>
    <property type="evidence" value="ECO:0000314"/>
    <property type="project" value="CAFA"/>
</dbReference>
<dbReference type="GO" id="GO:0004332">
    <property type="term" value="F:fructose-bisphosphate aldolase activity"/>
    <property type="evidence" value="ECO:0000314"/>
    <property type="project" value="CAFA"/>
</dbReference>
<dbReference type="GO" id="GO:0000287">
    <property type="term" value="F:magnesium ion binding"/>
    <property type="evidence" value="ECO:0000314"/>
    <property type="project" value="CAFA"/>
</dbReference>
<dbReference type="GO" id="GO:0016311">
    <property type="term" value="P:dephosphorylation"/>
    <property type="evidence" value="ECO:0000314"/>
    <property type="project" value="CAFA"/>
</dbReference>
<dbReference type="GO" id="GO:0006094">
    <property type="term" value="P:gluconeogenesis"/>
    <property type="evidence" value="ECO:0000314"/>
    <property type="project" value="CAFA"/>
</dbReference>
<dbReference type="GO" id="GO:0006740">
    <property type="term" value="P:NADPH regeneration"/>
    <property type="evidence" value="ECO:0000314"/>
    <property type="project" value="CAFA"/>
</dbReference>
<dbReference type="HAMAP" id="MF_02067">
    <property type="entry name" value="FBP_aldolase_phosphatase"/>
    <property type="match status" value="1"/>
</dbReference>
<dbReference type="InterPro" id="IPR002803">
    <property type="entry name" value="FBPase_V"/>
</dbReference>
<dbReference type="InterPro" id="IPR036076">
    <property type="entry name" value="FBPase_V_sf"/>
</dbReference>
<dbReference type="NCBIfam" id="NF041126">
    <property type="entry name" value="FBP_aldo_phos"/>
    <property type="match status" value="1"/>
</dbReference>
<dbReference type="PANTHER" id="PTHR38341">
    <property type="entry name" value="FRUCTOSE-1,6-BISPHOSPHATE ALDOLASE/PHOSPHATASE"/>
    <property type="match status" value="1"/>
</dbReference>
<dbReference type="PANTHER" id="PTHR38341:SF1">
    <property type="entry name" value="FRUCTOSE-1,6-BISPHOSPHATE ALDOLASE_PHOSPHATASE"/>
    <property type="match status" value="1"/>
</dbReference>
<dbReference type="Pfam" id="PF01950">
    <property type="entry name" value="FBPase_3"/>
    <property type="match status" value="1"/>
</dbReference>
<dbReference type="PIRSF" id="PIRSF015647">
    <property type="entry name" value="FBPtase_archl"/>
    <property type="match status" value="1"/>
</dbReference>
<dbReference type="SUPFAM" id="SSF111249">
    <property type="entry name" value="Sulfolobus fructose-1,6-bisphosphatase-like"/>
    <property type="match status" value="1"/>
</dbReference>
<protein>
    <recommendedName>
        <fullName evidence="6 7">Fructose-1,6-bisphosphate aldolase/phosphatase</fullName>
        <shortName evidence="7">FBP A/P</shortName>
        <shortName evidence="6 7">FBP aldolase/phosphatase</shortName>
        <ecNumber evidence="2 3 4">3.1.3.11</ecNumber>
        <ecNumber evidence="3 4">4.1.2.13</ecNumber>
    </recommendedName>
    <alternativeName>
        <fullName evidence="5">Fructose-1,6-bisphosphatase</fullName>
        <shortName evidence="5">FBPase</shortName>
    </alternativeName>
</protein>
<evidence type="ECO:0000255" key="1">
    <source>
        <dbReference type="HAMAP-Rule" id="MF_02067"/>
    </source>
</evidence>
<evidence type="ECO:0000269" key="2">
    <source>
    </source>
</evidence>
<evidence type="ECO:0000269" key="3">
    <source>
    </source>
</evidence>
<evidence type="ECO:0000269" key="4">
    <source>
    </source>
</evidence>
<evidence type="ECO:0000303" key="5">
    <source>
    </source>
</evidence>
<evidence type="ECO:0000303" key="6">
    <source>
    </source>
</evidence>
<evidence type="ECO:0000303" key="7">
    <source>
    </source>
</evidence>
<evidence type="ECO:0000305" key="8"/>
<evidence type="ECO:0000305" key="9">
    <source>
    </source>
</evidence>
<evidence type="ECO:0000305" key="10">
    <source>
    </source>
</evidence>
<evidence type="ECO:0000305" key="11">
    <source>
    </source>
</evidence>
<evidence type="ECO:0000312" key="12">
    <source>
        <dbReference type="EMBL" id="BAK54233.1"/>
    </source>
</evidence>
<evidence type="ECO:0007744" key="13">
    <source>
        <dbReference type="PDB" id="1UMG"/>
    </source>
</evidence>
<evidence type="ECO:0007744" key="14">
    <source>
        <dbReference type="PDB" id="3R1M"/>
    </source>
</evidence>
<evidence type="ECO:0007829" key="15">
    <source>
        <dbReference type="PDB" id="1UMG"/>
    </source>
</evidence>
<evidence type="ECO:0007829" key="16">
    <source>
        <dbReference type="PDB" id="3R1M"/>
    </source>
</evidence>
<keyword id="KW-0002">3D-structure</keyword>
<keyword id="KW-0119">Carbohydrate metabolism</keyword>
<keyword id="KW-0312">Gluconeogenesis</keyword>
<keyword id="KW-0378">Hydrolase</keyword>
<keyword id="KW-0456">Lyase</keyword>
<keyword id="KW-0460">Magnesium</keyword>
<keyword id="KW-0479">Metal-binding</keyword>
<keyword id="KW-1185">Reference proteome</keyword>
<keyword id="KW-0704">Schiff base</keyword>